<gene>
    <name type="primary">hoxc4</name>
    <name type="synonym">hoxc4a</name>
</gene>
<dbReference type="EMBL" id="AB026955">
    <property type="protein sequence ID" value="BAA86238.1"/>
    <property type="molecule type" value="mRNA"/>
</dbReference>
<dbReference type="RefSeq" id="NP_001098348.1">
    <property type="nucleotide sequence ID" value="NM_001104878.2"/>
</dbReference>
<dbReference type="RefSeq" id="XP_011475037.1">
    <property type="nucleotide sequence ID" value="XM_011476735.1"/>
</dbReference>
<dbReference type="SMR" id="Q9PVS4"/>
<dbReference type="FunCoup" id="Q9PVS4">
    <property type="interactions" value="292"/>
</dbReference>
<dbReference type="STRING" id="8090.ENSORLP00000009978"/>
<dbReference type="Ensembl" id="ENSORLT00000009979.3">
    <property type="protein sequence ID" value="ENSORLP00000009978.2"/>
    <property type="gene ID" value="ENSORLG00000007955.3"/>
</dbReference>
<dbReference type="Ensembl" id="ENSORLT00015030554.1">
    <property type="protein sequence ID" value="ENSORLP00015021134.1"/>
    <property type="gene ID" value="ENSORLG00015022346.1"/>
</dbReference>
<dbReference type="Ensembl" id="ENSORLT00020005669.1">
    <property type="protein sequence ID" value="ENSORLP00020024944.1"/>
    <property type="gene ID" value="ENSORLG00020006629.1"/>
</dbReference>
<dbReference type="GeneID" id="100125418"/>
<dbReference type="KEGG" id="ola:100125418"/>
<dbReference type="CTD" id="30345"/>
<dbReference type="eggNOG" id="KOG0489">
    <property type="taxonomic scope" value="Eukaryota"/>
</dbReference>
<dbReference type="GeneTree" id="ENSGT00940000160794"/>
<dbReference type="HOGENOM" id="CLU_061398_0_0_1"/>
<dbReference type="InParanoid" id="Q9PVS4"/>
<dbReference type="OMA" id="QDRQYNC"/>
<dbReference type="OrthoDB" id="6159439at2759"/>
<dbReference type="TreeFam" id="TF352857"/>
<dbReference type="Proteomes" id="UP000001038">
    <property type="component" value="Chromosome 7"/>
</dbReference>
<dbReference type="Proteomes" id="UP000265180">
    <property type="component" value="Chromosome 7"/>
</dbReference>
<dbReference type="Proteomes" id="UP000265200">
    <property type="component" value="Chromosome 7"/>
</dbReference>
<dbReference type="Bgee" id="ENSORLG00000007955">
    <property type="expression patterns" value="Expressed in sexually immature organism and 9 other cell types or tissues"/>
</dbReference>
<dbReference type="GO" id="GO:0005654">
    <property type="term" value="C:nucleoplasm"/>
    <property type="evidence" value="ECO:0000318"/>
    <property type="project" value="GO_Central"/>
</dbReference>
<dbReference type="GO" id="GO:0000981">
    <property type="term" value="F:DNA-binding transcription factor activity, RNA polymerase II-specific"/>
    <property type="evidence" value="ECO:0000318"/>
    <property type="project" value="GO_Central"/>
</dbReference>
<dbReference type="GO" id="GO:0000978">
    <property type="term" value="F:RNA polymerase II cis-regulatory region sequence-specific DNA binding"/>
    <property type="evidence" value="ECO:0000318"/>
    <property type="project" value="GO_Central"/>
</dbReference>
<dbReference type="GO" id="GO:0009952">
    <property type="term" value="P:anterior/posterior pattern specification"/>
    <property type="evidence" value="ECO:0000318"/>
    <property type="project" value="GO_Central"/>
</dbReference>
<dbReference type="GO" id="GO:0048704">
    <property type="term" value="P:embryonic skeletal system morphogenesis"/>
    <property type="evidence" value="ECO:0000318"/>
    <property type="project" value="GO_Central"/>
</dbReference>
<dbReference type="GO" id="GO:0045944">
    <property type="term" value="P:positive regulation of transcription by RNA polymerase II"/>
    <property type="evidence" value="ECO:0000318"/>
    <property type="project" value="GO_Central"/>
</dbReference>
<dbReference type="CDD" id="cd00086">
    <property type="entry name" value="homeodomain"/>
    <property type="match status" value="1"/>
</dbReference>
<dbReference type="FunFam" id="1.10.10.60:FF:000029">
    <property type="entry name" value="Homeobox protein Hox-D4"/>
    <property type="match status" value="1"/>
</dbReference>
<dbReference type="Gene3D" id="1.10.10.60">
    <property type="entry name" value="Homeodomain-like"/>
    <property type="match status" value="1"/>
</dbReference>
<dbReference type="InterPro" id="IPR050609">
    <property type="entry name" value="Antp_homeobox_Deformed_sf"/>
</dbReference>
<dbReference type="InterPro" id="IPR001356">
    <property type="entry name" value="HD"/>
</dbReference>
<dbReference type="InterPro" id="IPR020479">
    <property type="entry name" value="HD_metazoa"/>
</dbReference>
<dbReference type="InterPro" id="IPR017995">
    <property type="entry name" value="Homeobox_antennapedia"/>
</dbReference>
<dbReference type="InterPro" id="IPR001827">
    <property type="entry name" value="Homeobox_Antennapedia_CS"/>
</dbReference>
<dbReference type="InterPro" id="IPR017970">
    <property type="entry name" value="Homeobox_CS"/>
</dbReference>
<dbReference type="InterPro" id="IPR009057">
    <property type="entry name" value="Homeodomain-like_sf"/>
</dbReference>
<dbReference type="PANTHER" id="PTHR45771:SF9">
    <property type="entry name" value="HOMEOBOX PROTEIN HOX-C4"/>
    <property type="match status" value="1"/>
</dbReference>
<dbReference type="PANTHER" id="PTHR45771">
    <property type="entry name" value="HOMEOTIC PROTEIN DEFORMED"/>
    <property type="match status" value="1"/>
</dbReference>
<dbReference type="Pfam" id="PF00046">
    <property type="entry name" value="Homeodomain"/>
    <property type="match status" value="1"/>
</dbReference>
<dbReference type="PRINTS" id="PR00025">
    <property type="entry name" value="ANTENNAPEDIA"/>
</dbReference>
<dbReference type="PRINTS" id="PR00024">
    <property type="entry name" value="HOMEOBOX"/>
</dbReference>
<dbReference type="SMART" id="SM00389">
    <property type="entry name" value="HOX"/>
    <property type="match status" value="1"/>
</dbReference>
<dbReference type="SUPFAM" id="SSF46689">
    <property type="entry name" value="Homeodomain-like"/>
    <property type="match status" value="1"/>
</dbReference>
<dbReference type="PROSITE" id="PS00032">
    <property type="entry name" value="ANTENNAPEDIA"/>
    <property type="match status" value="1"/>
</dbReference>
<dbReference type="PROSITE" id="PS00027">
    <property type="entry name" value="HOMEOBOX_1"/>
    <property type="match status" value="1"/>
</dbReference>
<dbReference type="PROSITE" id="PS50071">
    <property type="entry name" value="HOMEOBOX_2"/>
    <property type="match status" value="1"/>
</dbReference>
<proteinExistence type="evidence at transcript level"/>
<protein>
    <recommendedName>
        <fullName>Homeobox protein Hox-C4</fullName>
    </recommendedName>
</protein>
<feature type="chain" id="PRO_0000200168" description="Homeobox protein Hox-C4">
    <location>
        <begin position="1"/>
        <end position="261"/>
    </location>
</feature>
<feature type="DNA-binding region" description="Homeobox" evidence="2">
    <location>
        <begin position="154"/>
        <end position="213"/>
    </location>
</feature>
<feature type="region of interest" description="Disordered" evidence="3">
    <location>
        <begin position="85"/>
        <end position="130"/>
    </location>
</feature>
<feature type="region of interest" description="Disordered" evidence="3">
    <location>
        <begin position="212"/>
        <end position="261"/>
    </location>
</feature>
<feature type="short sequence motif" description="Antp-type hexapeptide">
    <location>
        <begin position="133"/>
        <end position="138"/>
    </location>
</feature>
<feature type="compositionally biased region" description="Low complexity" evidence="3">
    <location>
        <begin position="101"/>
        <end position="113"/>
    </location>
</feature>
<feature type="compositionally biased region" description="Polar residues" evidence="3">
    <location>
        <begin position="114"/>
        <end position="130"/>
    </location>
</feature>
<feature type="compositionally biased region" description="Low complexity" evidence="3">
    <location>
        <begin position="222"/>
        <end position="245"/>
    </location>
</feature>
<accession>Q9PVS4</accession>
<reference key="1">
    <citation type="submission" date="1999-05" db="EMBL/GenBank/DDBJ databases">
        <title>Hox genes of the medakafish Oryzias latipes.</title>
        <authorList>
            <person name="Kondo S."/>
            <person name="Naruse K."/>
            <person name="Shima A."/>
        </authorList>
    </citation>
    <scope>NUCLEOTIDE SEQUENCE [MRNA]</scope>
</reference>
<sequence>MIMSSYLMESNYIDPKFPPCEEYSQNNYIPDSPEYYSRARDTGYQHHHQELYPPRASYQERQYNCASIPEPDTPRGHGIPHSAHLLAGKGQPASCETPQLSMSPATPPAAASACNQATPEHPNSTASSKQPVVYPWMKKIHVSTVNSGYNGTEPKRSRTAYTRQQVLELEKEFHYNRYLTRRRRIEIAHTLVLSERQIKIWFQNRRMKWKKDHRLPNTKVRSSSSGSNTSSAAGGVAAASATNSGPDELSGAQHGEDITRL</sequence>
<comment type="function">
    <text evidence="1">Sequence-specific transcription factor which is part of a developmental regulatory system that provides cells with specific positional identities on the anterior-posterior axis.</text>
</comment>
<comment type="subcellular location">
    <subcellularLocation>
        <location evidence="2">Nucleus</location>
    </subcellularLocation>
</comment>
<comment type="similarity">
    <text evidence="4">Belongs to the Antp homeobox family. Deformed subfamily.</text>
</comment>
<name>HXC4_ORYLA</name>
<keyword id="KW-0217">Developmental protein</keyword>
<keyword id="KW-0238">DNA-binding</keyword>
<keyword id="KW-0371">Homeobox</keyword>
<keyword id="KW-0539">Nucleus</keyword>
<keyword id="KW-1185">Reference proteome</keyword>
<keyword id="KW-0804">Transcription</keyword>
<keyword id="KW-0805">Transcription regulation</keyword>
<organism>
    <name type="scientific">Oryzias latipes</name>
    <name type="common">Japanese rice fish</name>
    <name type="synonym">Japanese killifish</name>
    <dbReference type="NCBI Taxonomy" id="8090"/>
    <lineage>
        <taxon>Eukaryota</taxon>
        <taxon>Metazoa</taxon>
        <taxon>Chordata</taxon>
        <taxon>Craniata</taxon>
        <taxon>Vertebrata</taxon>
        <taxon>Euteleostomi</taxon>
        <taxon>Actinopterygii</taxon>
        <taxon>Neopterygii</taxon>
        <taxon>Teleostei</taxon>
        <taxon>Neoteleostei</taxon>
        <taxon>Acanthomorphata</taxon>
        <taxon>Ovalentaria</taxon>
        <taxon>Atherinomorphae</taxon>
        <taxon>Beloniformes</taxon>
        <taxon>Adrianichthyidae</taxon>
        <taxon>Oryziinae</taxon>
        <taxon>Oryzias</taxon>
    </lineage>
</organism>
<evidence type="ECO:0000250" key="1"/>
<evidence type="ECO:0000255" key="2">
    <source>
        <dbReference type="PROSITE-ProRule" id="PRU00108"/>
    </source>
</evidence>
<evidence type="ECO:0000256" key="3">
    <source>
        <dbReference type="SAM" id="MobiDB-lite"/>
    </source>
</evidence>
<evidence type="ECO:0000305" key="4"/>